<reference key="1">
    <citation type="submission" date="2004-11" db="EMBL/GenBank/DDBJ databases">
        <authorList>
            <consortium name="The German cDNA consortium"/>
        </authorList>
    </citation>
    <scope>NUCLEOTIDE SEQUENCE [LARGE SCALE MRNA]</scope>
    <source>
        <tissue>Brain cortex</tissue>
    </source>
</reference>
<protein>
    <recommendedName>
        <fullName evidence="1">Ubiquitin-fold modifier 1</fullName>
    </recommendedName>
</protein>
<gene>
    <name evidence="1" type="primary">UFM1</name>
</gene>
<organism>
    <name type="scientific">Pongo abelii</name>
    <name type="common">Sumatran orangutan</name>
    <name type="synonym">Pongo pygmaeus abelii</name>
    <dbReference type="NCBI Taxonomy" id="9601"/>
    <lineage>
        <taxon>Eukaryota</taxon>
        <taxon>Metazoa</taxon>
        <taxon>Chordata</taxon>
        <taxon>Craniata</taxon>
        <taxon>Vertebrata</taxon>
        <taxon>Euteleostomi</taxon>
        <taxon>Mammalia</taxon>
        <taxon>Eutheria</taxon>
        <taxon>Euarchontoglires</taxon>
        <taxon>Primates</taxon>
        <taxon>Haplorrhini</taxon>
        <taxon>Catarrhini</taxon>
        <taxon>Hominidae</taxon>
        <taxon>Pongo</taxon>
    </lineage>
</organism>
<feature type="chain" id="PRO_0000042128" description="Ubiquitin-fold modifier 1">
    <location>
        <begin position="1"/>
        <end position="83"/>
    </location>
</feature>
<feature type="propeptide" id="PRO_0000042129" description="Removed in mature form" evidence="1">
    <location>
        <begin position="84"/>
        <end position="85"/>
    </location>
</feature>
<feature type="cross-link" description="Glycyl lysine isopeptide (Lys-Gly) (interchain with G-Cter in UFM1)" evidence="1">
    <location>
        <position position="69"/>
    </location>
</feature>
<feature type="cross-link" description="Glycyl lysine isopeptide (Gly-Lys) (interchain with K-? in acceptor proteins)" evidence="1">
    <location>
        <position position="83"/>
    </location>
</feature>
<feature type="sequence conflict" description="In Ref. 1; CAH90579." evidence="2" ref="1">
    <original>I</original>
    <variation>V</variation>
    <location>
        <position position="8"/>
    </location>
</feature>
<name>UFM1_PONAB</name>
<accession>Q5R4N5</accession>
<accession>Q5RCC8</accession>
<keyword id="KW-0963">Cytoplasm</keyword>
<keyword id="KW-1017">Isopeptide bond</keyword>
<keyword id="KW-0539">Nucleus</keyword>
<keyword id="KW-1185">Reference proteome</keyword>
<keyword id="KW-0832">Ubl conjugation</keyword>
<keyword id="KW-0833">Ubl conjugation pathway</keyword>
<comment type="function">
    <text evidence="1">Ubiquitin-like modifier which can be covalently attached via an isopeptide bond to lysine residues of substrate proteins as a monomer or a lysine-linked polymer. The so-called ufmylation, requires the UFM1-activating E1 enzyme UBA5, the UFM1-conjugating E2 enzyme UFC1, and the UFM1-ligase E3 enzyme UFL1. Ufmylation is involved in various processes, such as ribosome recycling, response to DNA damage, transcription or reticulophagy (also called ER-phagy) induced in response to endoplasmic reticulum stress.</text>
</comment>
<comment type="subunit">
    <text evidence="1">Interacts with UBA5. Interacts with UFC1.</text>
</comment>
<comment type="subcellular location">
    <subcellularLocation>
        <location evidence="1">Nucleus</location>
    </subcellularLocation>
    <subcellularLocation>
        <location evidence="1">Cytoplasm</location>
    </subcellularLocation>
</comment>
<comment type="PTM">
    <text evidence="1">UFM1 precursor is cleaved by UFSP1, promoting its maturation: processing of the C-terminal Ser-Cys dipeptide is required to expose its C-terminal conserved Gly residue.</text>
</comment>
<comment type="similarity">
    <text evidence="2">Belongs to the UFM1 family.</text>
</comment>
<dbReference type="EMBL" id="CR858346">
    <property type="protein sequence ID" value="CAH90579.1"/>
    <property type="molecule type" value="mRNA"/>
</dbReference>
<dbReference type="EMBL" id="CR861210">
    <property type="protein sequence ID" value="CAH93281.1"/>
    <property type="molecule type" value="mRNA"/>
</dbReference>
<dbReference type="RefSeq" id="NP_001125310.1">
    <property type="nucleotide sequence ID" value="NM_001131838.1"/>
</dbReference>
<dbReference type="SMR" id="Q5R4N5"/>
<dbReference type="FunCoup" id="Q5R4N5">
    <property type="interactions" value="3118"/>
</dbReference>
<dbReference type="STRING" id="9601.ENSPPYP00000006031"/>
<dbReference type="Ensembl" id="ENSPPYT00000038496.1">
    <property type="protein sequence ID" value="ENSPPYP00000039301.1"/>
    <property type="gene ID" value="ENSPPYG00000040474.1"/>
</dbReference>
<dbReference type="GeneID" id="100172209"/>
<dbReference type="KEGG" id="pon:100172209"/>
<dbReference type="CTD" id="51569"/>
<dbReference type="eggNOG" id="KOG3483">
    <property type="taxonomic scope" value="Eukaryota"/>
</dbReference>
<dbReference type="GeneTree" id="ENSGT00390000010391"/>
<dbReference type="InParanoid" id="Q5R4N5"/>
<dbReference type="OMA" id="MEHAVGK"/>
<dbReference type="OrthoDB" id="284357at2759"/>
<dbReference type="Proteomes" id="UP000001595">
    <property type="component" value="Chromosome 13"/>
</dbReference>
<dbReference type="GO" id="GO:0005737">
    <property type="term" value="C:cytoplasm"/>
    <property type="evidence" value="ECO:0000250"/>
    <property type="project" value="UniProtKB"/>
</dbReference>
<dbReference type="GO" id="GO:0005634">
    <property type="term" value="C:nucleus"/>
    <property type="evidence" value="ECO:0000250"/>
    <property type="project" value="UniProtKB"/>
</dbReference>
<dbReference type="GO" id="GO:0007420">
    <property type="term" value="P:brain development"/>
    <property type="evidence" value="ECO:0000250"/>
    <property type="project" value="UniProtKB"/>
</dbReference>
<dbReference type="GO" id="GO:1990592">
    <property type="term" value="P:protein K69-linked ufmylation"/>
    <property type="evidence" value="ECO:0000250"/>
    <property type="project" value="UniProtKB"/>
</dbReference>
<dbReference type="GO" id="GO:0071569">
    <property type="term" value="P:protein ufmylation"/>
    <property type="evidence" value="ECO:0000250"/>
    <property type="project" value="UniProtKB"/>
</dbReference>
<dbReference type="GO" id="GO:0033146">
    <property type="term" value="P:regulation of intracellular estrogen receptor signaling pathway"/>
    <property type="evidence" value="ECO:0000250"/>
    <property type="project" value="UniProtKB"/>
</dbReference>
<dbReference type="GO" id="GO:0034976">
    <property type="term" value="P:response to endoplasmic reticulum stress"/>
    <property type="evidence" value="ECO:0000250"/>
    <property type="project" value="UniProtKB"/>
</dbReference>
<dbReference type="GO" id="GO:0061709">
    <property type="term" value="P:reticulophagy"/>
    <property type="evidence" value="ECO:0000250"/>
    <property type="project" value="UniProtKB"/>
</dbReference>
<dbReference type="CDD" id="cd01766">
    <property type="entry name" value="Ubl_UFM1"/>
    <property type="match status" value="1"/>
</dbReference>
<dbReference type="FunFam" id="3.10.20.90:FF:000044">
    <property type="entry name" value="Ubiquitin-fold modifier 1"/>
    <property type="match status" value="1"/>
</dbReference>
<dbReference type="Gene3D" id="3.10.20.90">
    <property type="entry name" value="Phosphatidylinositol 3-kinase Catalytic Subunit, Chain A, domain 1"/>
    <property type="match status" value="1"/>
</dbReference>
<dbReference type="InterPro" id="IPR029071">
    <property type="entry name" value="Ubiquitin-like_domsf"/>
</dbReference>
<dbReference type="InterPro" id="IPR005375">
    <property type="entry name" value="UFM1"/>
</dbReference>
<dbReference type="PANTHER" id="PTHR15825">
    <property type="entry name" value="UBIQUITIN-FOLD MODIFIER 1"/>
    <property type="match status" value="1"/>
</dbReference>
<dbReference type="PANTHER" id="PTHR15825:SF5">
    <property type="entry name" value="UBIQUITIN-FOLD MODIFIER 1"/>
    <property type="match status" value="1"/>
</dbReference>
<dbReference type="Pfam" id="PF03671">
    <property type="entry name" value="Ufm1"/>
    <property type="match status" value="1"/>
</dbReference>
<dbReference type="PIRSF" id="PIRSF038027">
    <property type="entry name" value="Ubiquitin-like_Ufm1"/>
    <property type="match status" value="1"/>
</dbReference>
<dbReference type="SUPFAM" id="SSF54236">
    <property type="entry name" value="Ubiquitin-like"/>
    <property type="match status" value="1"/>
</dbReference>
<proteinExistence type="inferred from homology"/>
<sequence>MSKVSFKITLTSDPRLPYKVLSVPESTPFTAVLKFAAEEFKVPAATSAIITNDGIGINPAQTAGNVFLKHGSELRIIPRDRVGSC</sequence>
<evidence type="ECO:0000250" key="1">
    <source>
        <dbReference type="UniProtKB" id="P61960"/>
    </source>
</evidence>
<evidence type="ECO:0000305" key="2"/>